<gene>
    <name evidence="27" type="primary">RHOU</name>
    <name evidence="25" type="synonym">ARHU</name>
    <name evidence="22" type="synonym">CDC42L1</name>
    <name evidence="24" type="synonym">G28K</name>
    <name evidence="21" type="synonym">WRCH1</name>
    <name type="ORF">SB128</name>
</gene>
<reference evidence="19 21" key="1">
    <citation type="journal article" date="2001" name="Genes Dev.">
        <title>Wrch-1, a novel member of the Rho gene family that is regulated by Wnt-1.</title>
        <authorList>
            <person name="Tao W."/>
            <person name="Pennica D."/>
            <person name="Xu L."/>
            <person name="Kalejta R.F."/>
            <person name="Levine A.J."/>
        </authorList>
    </citation>
    <scope>NUCLEOTIDE SEQUENCE [MRNA] (ISOFORM 1)</scope>
    <scope>FUNCTION</scope>
    <scope>TISSUE SPECIFICITY</scope>
    <scope>MUTAGENESIS OF THR-63 AND GLN-107</scope>
</reference>
<reference evidence="19 25" key="2">
    <citation type="journal article" date="2002" name="Int. J. Oncol.">
        <title>Expression of WRCH1 in human cancer and down-regulation of WRCH1 by beta-estradiol in MCF-7 cells.</title>
        <authorList>
            <person name="Kirikoshi H."/>
            <person name="Katoh M."/>
        </authorList>
    </citation>
    <scope>NUCLEOTIDE SEQUENCE [MRNA] (ISOFORM 1)</scope>
</reference>
<reference evidence="19 24" key="3">
    <citation type="journal article" date="2004" name="J. Gastroenterol. Hepatol.">
        <title>Novel human, mouse and Xenopus genes encoding a member of the RAS superfamily of low-molecular-weight GTP-binding proteins and its downregulation in W/WV mouse jejunum.</title>
        <authorList>
            <person name="Daigo Y."/>
            <person name="Takayama I."/>
            <person name="Ponder B.A.J."/>
            <person name="Caldas C."/>
            <person name="Ward S.M."/>
            <person name="Sanders K.M."/>
            <person name="Fujino M.A."/>
        </authorList>
    </citation>
    <scope>NUCLEOTIDE SEQUENCE [MRNA] (ISOFORM 1)</scope>
    <scope>TISSUE SPECIFICITY</scope>
</reference>
<reference evidence="23" key="4">
    <citation type="journal article" date="2006" name="Genetics">
        <title>Scan of human genome reveals no new loci under ancient balancing selection.</title>
        <authorList>
            <person name="Bubb K.L."/>
            <person name="Bovee D."/>
            <person name="Buckley D."/>
            <person name="Haugen E."/>
            <person name="Kibukawa M."/>
            <person name="Paddock M."/>
            <person name="Palmieri A."/>
            <person name="Subramanian S."/>
            <person name="Zhou Y."/>
            <person name="Kaul R."/>
            <person name="Green P."/>
            <person name="Olson M.V."/>
        </authorList>
    </citation>
    <scope>NUCLEOTIDE SEQUENCE [GENOMIC DNA]</scope>
</reference>
<reference evidence="19 22" key="5">
    <citation type="submission" date="1999-12" db="EMBL/GenBank/DDBJ databases">
        <title>A novel GTPase homologous to CDC42.</title>
        <authorList>
            <person name="Zhang J.S."/>
            <person name="Smith D.I."/>
            <person name="Urrutia R."/>
        </authorList>
    </citation>
    <scope>NUCLEOTIDE SEQUENCE [MRNA] (ISOFORM 1)</scope>
</reference>
<reference evidence="19 22" key="6">
    <citation type="submission" date="2000-06" db="EMBL/GenBank/DDBJ databases">
        <title>Ryu: a new member of Rho family.</title>
        <authorList>
            <person name="Ikeda W."/>
            <person name="Nakanishi H."/>
            <person name="Takai Y."/>
        </authorList>
    </citation>
    <scope>NUCLEOTIDE SEQUENCE [MRNA] (ISOFORM 1)</scope>
</reference>
<reference evidence="19 22" key="7">
    <citation type="submission" date="2000-03" db="EMBL/GenBank/DDBJ databases">
        <authorList>
            <person name="Zhang W."/>
            <person name="Wan T."/>
            <person name="Li N."/>
            <person name="He L."/>
            <person name="Chen T."/>
            <person name="Cao X."/>
        </authorList>
    </citation>
    <scope>NUCLEOTIDE SEQUENCE [LARGE SCALE MRNA] (ISOFORM 2)</scope>
</reference>
<reference evidence="19 26" key="8">
    <citation type="journal article" date="2004" name="Nat. Genet.">
        <title>Complete sequencing and characterization of 21,243 full-length human cDNAs.</title>
        <authorList>
            <person name="Ota T."/>
            <person name="Suzuki Y."/>
            <person name="Nishikawa T."/>
            <person name="Otsuki T."/>
            <person name="Sugiyama T."/>
            <person name="Irie R."/>
            <person name="Wakamatsu A."/>
            <person name="Hayashi K."/>
            <person name="Sato H."/>
            <person name="Nagai K."/>
            <person name="Kimura K."/>
            <person name="Makita H."/>
            <person name="Sekine M."/>
            <person name="Obayashi M."/>
            <person name="Nishi T."/>
            <person name="Shibahara T."/>
            <person name="Tanaka T."/>
            <person name="Ishii S."/>
            <person name="Yamamoto J."/>
            <person name="Saito K."/>
            <person name="Kawai Y."/>
            <person name="Isono Y."/>
            <person name="Nakamura Y."/>
            <person name="Nagahari K."/>
            <person name="Murakami K."/>
            <person name="Yasuda T."/>
            <person name="Iwayanagi T."/>
            <person name="Wagatsuma M."/>
            <person name="Shiratori A."/>
            <person name="Sudo H."/>
            <person name="Hosoiri T."/>
            <person name="Kaku Y."/>
            <person name="Kodaira H."/>
            <person name="Kondo H."/>
            <person name="Sugawara M."/>
            <person name="Takahashi M."/>
            <person name="Kanda K."/>
            <person name="Yokoi T."/>
            <person name="Furuya T."/>
            <person name="Kikkawa E."/>
            <person name="Omura Y."/>
            <person name="Abe K."/>
            <person name="Kamihara K."/>
            <person name="Katsuta N."/>
            <person name="Sato K."/>
            <person name="Tanikawa M."/>
            <person name="Yamazaki M."/>
            <person name="Ninomiya K."/>
            <person name="Ishibashi T."/>
            <person name="Yamashita H."/>
            <person name="Murakawa K."/>
            <person name="Fujimori K."/>
            <person name="Tanai H."/>
            <person name="Kimata M."/>
            <person name="Watanabe M."/>
            <person name="Hiraoka S."/>
            <person name="Chiba Y."/>
            <person name="Ishida S."/>
            <person name="Ono Y."/>
            <person name="Takiguchi S."/>
            <person name="Watanabe S."/>
            <person name="Yosida M."/>
            <person name="Hotuta T."/>
            <person name="Kusano J."/>
            <person name="Kanehori K."/>
            <person name="Takahashi-Fujii A."/>
            <person name="Hara H."/>
            <person name="Tanase T.-O."/>
            <person name="Nomura Y."/>
            <person name="Togiya S."/>
            <person name="Komai F."/>
            <person name="Hara R."/>
            <person name="Takeuchi K."/>
            <person name="Arita M."/>
            <person name="Imose N."/>
            <person name="Musashino K."/>
            <person name="Yuuki H."/>
            <person name="Oshima A."/>
            <person name="Sasaki N."/>
            <person name="Aotsuka S."/>
            <person name="Yoshikawa Y."/>
            <person name="Matsunawa H."/>
            <person name="Ichihara T."/>
            <person name="Shiohata N."/>
            <person name="Sano S."/>
            <person name="Moriya S."/>
            <person name="Momiyama H."/>
            <person name="Satoh N."/>
            <person name="Takami S."/>
            <person name="Terashima Y."/>
            <person name="Suzuki O."/>
            <person name="Nakagawa S."/>
            <person name="Senoh A."/>
            <person name="Mizoguchi H."/>
            <person name="Goto Y."/>
            <person name="Shimizu F."/>
            <person name="Wakebe H."/>
            <person name="Hishigaki H."/>
            <person name="Watanabe T."/>
            <person name="Sugiyama A."/>
            <person name="Takemoto M."/>
            <person name="Kawakami B."/>
            <person name="Yamazaki M."/>
            <person name="Watanabe K."/>
            <person name="Kumagai A."/>
            <person name="Itakura S."/>
            <person name="Fukuzumi Y."/>
            <person name="Fujimori Y."/>
            <person name="Komiyama M."/>
            <person name="Tashiro H."/>
            <person name="Tanigami A."/>
            <person name="Fujiwara T."/>
            <person name="Ono T."/>
            <person name="Yamada K."/>
            <person name="Fujii Y."/>
            <person name="Ozaki K."/>
            <person name="Hirao M."/>
            <person name="Ohmori Y."/>
            <person name="Kawabata A."/>
            <person name="Hikiji T."/>
            <person name="Kobatake N."/>
            <person name="Inagaki H."/>
            <person name="Ikema Y."/>
            <person name="Okamoto S."/>
            <person name="Okitani R."/>
            <person name="Kawakami T."/>
            <person name="Noguchi S."/>
            <person name="Itoh T."/>
            <person name="Shigeta K."/>
            <person name="Senba T."/>
            <person name="Matsumura K."/>
            <person name="Nakajima Y."/>
            <person name="Mizuno T."/>
            <person name="Morinaga M."/>
            <person name="Sasaki M."/>
            <person name="Togashi T."/>
            <person name="Oyama M."/>
            <person name="Hata H."/>
            <person name="Watanabe M."/>
            <person name="Komatsu T."/>
            <person name="Mizushima-Sugano J."/>
            <person name="Satoh T."/>
            <person name="Shirai Y."/>
            <person name="Takahashi Y."/>
            <person name="Nakagawa K."/>
            <person name="Okumura K."/>
            <person name="Nagase T."/>
            <person name="Nomura N."/>
            <person name="Kikuchi H."/>
            <person name="Masuho Y."/>
            <person name="Yamashita R."/>
            <person name="Nakai K."/>
            <person name="Yada T."/>
            <person name="Nakamura Y."/>
            <person name="Ohara O."/>
            <person name="Isogai T."/>
            <person name="Sugano S."/>
        </authorList>
    </citation>
    <scope>NUCLEOTIDE SEQUENCE [LARGE SCALE MRNA] (ISOFORM 1)</scope>
    <source>
        <tissue evidence="26">Hippocampus</tissue>
    </source>
</reference>
<reference evidence="19 22" key="9">
    <citation type="submission" date="2005-03" db="EMBL/GenBank/DDBJ databases">
        <authorList>
            <person name="Totoki Y."/>
            <person name="Toyoda A."/>
            <person name="Takeda T."/>
            <person name="Sakaki Y."/>
            <person name="Tanaka A."/>
            <person name="Yokoyama S."/>
            <person name="Ohara O."/>
            <person name="Nagase T."/>
            <person name="Kikuno R.F."/>
        </authorList>
    </citation>
    <scope>NUCLEOTIDE SEQUENCE [LARGE SCALE MRNA] (ISOFORM 1)</scope>
    <source>
        <tissue>Brain</tissue>
    </source>
</reference>
<reference key="10">
    <citation type="journal article" date="2006" name="Nature">
        <title>The DNA sequence and biological annotation of human chromosome 1.</title>
        <authorList>
            <person name="Gregory S.G."/>
            <person name="Barlow K.F."/>
            <person name="McLay K.E."/>
            <person name="Kaul R."/>
            <person name="Swarbreck D."/>
            <person name="Dunham A."/>
            <person name="Scott C.E."/>
            <person name="Howe K.L."/>
            <person name="Woodfine K."/>
            <person name="Spencer C.C.A."/>
            <person name="Jones M.C."/>
            <person name="Gillson C."/>
            <person name="Searle S."/>
            <person name="Zhou Y."/>
            <person name="Kokocinski F."/>
            <person name="McDonald L."/>
            <person name="Evans R."/>
            <person name="Phillips K."/>
            <person name="Atkinson A."/>
            <person name="Cooper R."/>
            <person name="Jones C."/>
            <person name="Hall R.E."/>
            <person name="Andrews T.D."/>
            <person name="Lloyd C."/>
            <person name="Ainscough R."/>
            <person name="Almeida J.P."/>
            <person name="Ambrose K.D."/>
            <person name="Anderson F."/>
            <person name="Andrew R.W."/>
            <person name="Ashwell R.I.S."/>
            <person name="Aubin K."/>
            <person name="Babbage A.K."/>
            <person name="Bagguley C.L."/>
            <person name="Bailey J."/>
            <person name="Beasley H."/>
            <person name="Bethel G."/>
            <person name="Bird C.P."/>
            <person name="Bray-Allen S."/>
            <person name="Brown J.Y."/>
            <person name="Brown A.J."/>
            <person name="Buckley D."/>
            <person name="Burton J."/>
            <person name="Bye J."/>
            <person name="Carder C."/>
            <person name="Chapman J.C."/>
            <person name="Clark S.Y."/>
            <person name="Clarke G."/>
            <person name="Clee C."/>
            <person name="Cobley V."/>
            <person name="Collier R.E."/>
            <person name="Corby N."/>
            <person name="Coville G.J."/>
            <person name="Davies J."/>
            <person name="Deadman R."/>
            <person name="Dunn M."/>
            <person name="Earthrowl M."/>
            <person name="Ellington A.G."/>
            <person name="Errington H."/>
            <person name="Frankish A."/>
            <person name="Frankland J."/>
            <person name="French L."/>
            <person name="Garner P."/>
            <person name="Garnett J."/>
            <person name="Gay L."/>
            <person name="Ghori M.R.J."/>
            <person name="Gibson R."/>
            <person name="Gilby L.M."/>
            <person name="Gillett W."/>
            <person name="Glithero R.J."/>
            <person name="Grafham D.V."/>
            <person name="Griffiths C."/>
            <person name="Griffiths-Jones S."/>
            <person name="Grocock R."/>
            <person name="Hammond S."/>
            <person name="Harrison E.S.I."/>
            <person name="Hart E."/>
            <person name="Haugen E."/>
            <person name="Heath P.D."/>
            <person name="Holmes S."/>
            <person name="Holt K."/>
            <person name="Howden P.J."/>
            <person name="Hunt A.R."/>
            <person name="Hunt S.E."/>
            <person name="Hunter G."/>
            <person name="Isherwood J."/>
            <person name="James R."/>
            <person name="Johnson C."/>
            <person name="Johnson D."/>
            <person name="Joy A."/>
            <person name="Kay M."/>
            <person name="Kershaw J.K."/>
            <person name="Kibukawa M."/>
            <person name="Kimberley A.M."/>
            <person name="King A."/>
            <person name="Knights A.J."/>
            <person name="Lad H."/>
            <person name="Laird G."/>
            <person name="Lawlor S."/>
            <person name="Leongamornlert D.A."/>
            <person name="Lloyd D.M."/>
            <person name="Loveland J."/>
            <person name="Lovell J."/>
            <person name="Lush M.J."/>
            <person name="Lyne R."/>
            <person name="Martin S."/>
            <person name="Mashreghi-Mohammadi M."/>
            <person name="Matthews L."/>
            <person name="Matthews N.S.W."/>
            <person name="McLaren S."/>
            <person name="Milne S."/>
            <person name="Mistry S."/>
            <person name="Moore M.J.F."/>
            <person name="Nickerson T."/>
            <person name="O'Dell C.N."/>
            <person name="Oliver K."/>
            <person name="Palmeiri A."/>
            <person name="Palmer S.A."/>
            <person name="Parker A."/>
            <person name="Patel D."/>
            <person name="Pearce A.V."/>
            <person name="Peck A.I."/>
            <person name="Pelan S."/>
            <person name="Phelps K."/>
            <person name="Phillimore B.J."/>
            <person name="Plumb R."/>
            <person name="Rajan J."/>
            <person name="Raymond C."/>
            <person name="Rouse G."/>
            <person name="Saenphimmachak C."/>
            <person name="Sehra H.K."/>
            <person name="Sheridan E."/>
            <person name="Shownkeen R."/>
            <person name="Sims S."/>
            <person name="Skuce C.D."/>
            <person name="Smith M."/>
            <person name="Steward C."/>
            <person name="Subramanian S."/>
            <person name="Sycamore N."/>
            <person name="Tracey A."/>
            <person name="Tromans A."/>
            <person name="Van Helmond Z."/>
            <person name="Wall M."/>
            <person name="Wallis J.M."/>
            <person name="White S."/>
            <person name="Whitehead S.L."/>
            <person name="Wilkinson J.E."/>
            <person name="Willey D.L."/>
            <person name="Williams H."/>
            <person name="Wilming L."/>
            <person name="Wray P.W."/>
            <person name="Wu Z."/>
            <person name="Coulson A."/>
            <person name="Vaudin M."/>
            <person name="Sulston J.E."/>
            <person name="Durbin R.M."/>
            <person name="Hubbard T."/>
            <person name="Wooster R."/>
            <person name="Dunham I."/>
            <person name="Carter N.P."/>
            <person name="McVean G."/>
            <person name="Ross M.T."/>
            <person name="Harrow J."/>
            <person name="Olson M.V."/>
            <person name="Beck S."/>
            <person name="Rogers J."/>
            <person name="Bentley D.R."/>
        </authorList>
    </citation>
    <scope>NUCLEOTIDE SEQUENCE [LARGE SCALE GENOMIC DNA]</scope>
</reference>
<reference evidence="19 22" key="11">
    <citation type="submission" date="2005-07" db="EMBL/GenBank/DDBJ databases">
        <authorList>
            <person name="Mural R.J."/>
            <person name="Istrail S."/>
            <person name="Sutton G.G."/>
            <person name="Florea L."/>
            <person name="Halpern A.L."/>
            <person name="Mobarry C.M."/>
            <person name="Lippert R."/>
            <person name="Walenz B."/>
            <person name="Shatkay H."/>
            <person name="Dew I."/>
            <person name="Miller J.R."/>
            <person name="Flanigan M.J."/>
            <person name="Edwards N.J."/>
            <person name="Bolanos R."/>
            <person name="Fasulo D."/>
            <person name="Halldorsson B.V."/>
            <person name="Hannenhalli S."/>
            <person name="Turner R."/>
            <person name="Yooseph S."/>
            <person name="Lu F."/>
            <person name="Nusskern D.R."/>
            <person name="Shue B.C."/>
            <person name="Zheng X.H."/>
            <person name="Zhong F."/>
            <person name="Delcher A.L."/>
            <person name="Huson D.H."/>
            <person name="Kravitz S.A."/>
            <person name="Mouchard L."/>
            <person name="Reinert K."/>
            <person name="Remington K.A."/>
            <person name="Clark A.G."/>
            <person name="Waterman M.S."/>
            <person name="Eichler E.E."/>
            <person name="Adams M.D."/>
            <person name="Hunkapiller M.W."/>
            <person name="Myers E.W."/>
            <person name="Venter J.C."/>
        </authorList>
    </citation>
    <scope>NUCLEOTIDE SEQUENCE [LARGE SCALE GENOMIC DNA]</scope>
</reference>
<reference evidence="19 20" key="12">
    <citation type="journal article" date="2004" name="Genome Res.">
        <title>The status, quality, and expansion of the NIH full-length cDNA project: the Mammalian Gene Collection (MGC).</title>
        <authorList>
            <consortium name="The MGC Project Team"/>
        </authorList>
    </citation>
    <scope>NUCLEOTIDE SEQUENCE [LARGE SCALE MRNA] (ISOFORM 1)</scope>
    <source>
        <tissue evidence="20">Brain</tissue>
    </source>
</reference>
<reference evidence="19" key="13">
    <citation type="journal article" date="2005" name="J. Biol. Chem.">
        <title>Transforming activity of the Rho family GTPase, Wrch-1, a Wnt-regulated Cdc42 homolog, is dependent on a novel carboxyl-terminal palmitoylation motif.</title>
        <authorList>
            <person name="Berzat A.C."/>
            <person name="Buss J.E."/>
            <person name="Chenette E.J."/>
            <person name="Weinbaum C.A."/>
            <person name="Shutes A."/>
            <person name="Der C.J."/>
            <person name="Minden A."/>
            <person name="Cox A.D."/>
        </authorList>
    </citation>
    <scope>SUBCELLULAR LOCATION</scope>
    <scope>MUTAGENESIS OF CYS-255 AND CYS-256</scope>
    <scope>PALMITOYLATION AT CYS-256</scope>
</reference>
<reference evidence="19" key="14">
    <citation type="journal article" date="2006" name="Methods Enzymol.">
        <title>Biochemical analyses of the Wrch atypical Rho family GTPases.</title>
        <authorList>
            <person name="Shutes A."/>
            <person name="Berzat A.C."/>
            <person name="Chenette E.J."/>
            <person name="Cox A.D."/>
            <person name="Der C.J."/>
        </authorList>
    </citation>
    <scope>FUNCTION</scope>
    <scope>COFACTOR</scope>
    <scope>SUBCELLULAR LOCATION</scope>
    <scope>GTP-BINDING</scope>
    <scope>PALMITOYLATION</scope>
</reference>
<reference evidence="19" key="15">
    <citation type="journal article" date="2007" name="Biol. Cell">
        <title>Identification of a bipartite focal adhesion localization signal in RhoU/Wrch-1, a Rho family GTPase that regulates cell adhesion and migration.</title>
        <authorList>
            <person name="Ory S."/>
            <person name="Brazier H."/>
            <person name="Blangy A."/>
        </authorList>
    </citation>
    <scope>FUNCTION</scope>
    <scope>SUBCELLULAR LOCATION</scope>
    <scope>INTERACTION WITH PAK3</scope>
    <scope>MUTAGENESIS OF THR-63; THR-81; PHE-83; PHE-86 AND GLN-107</scope>
</reference>
<reference key="16">
    <citation type="journal article" date="2008" name="Mol. Cell. Biol.">
        <title>The atypical Rho GTPase Wrch1 collaborates with the nonreceptor tyrosine kinases Pyk2 and Src in regulating cytoskeletal dynamics.</title>
        <authorList>
            <person name="Ruusala A."/>
            <person name="Aspenstrom P."/>
        </authorList>
    </citation>
    <scope>INTERACTION WITH PTK2B/PYK2</scope>
    <scope>FUNCTION</scope>
    <scope>SUBCELLULAR LOCATION</scope>
    <scope>PHOSPHORYLATION</scope>
</reference>
<reference key="17">
    <citation type="journal article" date="2011" name="BMC Biol.">
        <title>Identification and characterization of a set of conserved and new regulators of cytoskeletal organisation, cell morphology and migration.</title>
        <authorList>
            <person name="Bai S.W."/>
            <person name="Herrera-Abreu M.T."/>
            <person name="Rohn J.L."/>
            <person name="Racine V."/>
            <person name="Tajadura V."/>
            <person name="Suryavanshi N."/>
            <person name="Bechtel S."/>
            <person name="Wiemann S."/>
            <person name="Baum B."/>
            <person name="Ridley A.J."/>
        </authorList>
    </citation>
    <scope>FUNCTION</scope>
</reference>
<reference key="18">
    <citation type="journal article" date="2011" name="Biochem. Biophys. Res. Commun.">
        <title>ARHGAP30 is a Wrch-1-interacting protein involved in actin dynamics and cell adhesion.</title>
        <authorList>
            <person name="Naji L."/>
            <person name="Pacholsky D."/>
            <person name="Aspenstrom P."/>
        </authorList>
    </citation>
    <scope>INTERACTION WITH ARHGAP30 AND ARHGAP31</scope>
    <scope>MUTAGENESIS OF THR-63; PRO-80; PHE-83; PHE-86 AND GLN-107</scope>
</reference>
<reference key="19">
    <citation type="journal article" date="2015" name="J. Cell Biol.">
        <title>PAK4 promotes kinase-independent stabilization of RhoU to modulate cell adhesion.</title>
        <authorList>
            <person name="Dart A.E."/>
            <person name="Box G.M."/>
            <person name="Court W."/>
            <person name="Gale M.E."/>
            <person name="Brown J.P."/>
            <person name="Pinder S.E."/>
            <person name="Eccles S.A."/>
            <person name="Wells C.M."/>
        </authorList>
    </citation>
    <scope>FUNCTION</scope>
    <scope>UBIQUITINATION</scope>
    <scope>INTERACTION WITH PAK1 AND PAK4</scope>
    <scope>SUBCELLULAR LOCATION</scope>
    <scope>MUTAGENESIS OF LYS-177 AND LYS-248</scope>
</reference>
<reference evidence="19 22" key="20">
    <citation type="submission" date="2007-06" db="PDB data bank">
        <title>The crystal structure of RHOUA in the GDP-bound state.</title>
        <authorList>
            <consortium name="Structural genomics consortium (SGC)"/>
        </authorList>
    </citation>
    <scope>X-RAY CRYSTALLOGRAPHY (1.73 ANGSTROMS) OF 32-230 IN COMPLEX WITH GDP AND MAGNESIUM IONS</scope>
</reference>
<protein>
    <recommendedName>
        <fullName>Rho-related GTP-binding protein RhoU</fullName>
    </recommendedName>
    <alternativeName>
        <fullName>CDC42-like GTPase 1</fullName>
    </alternativeName>
    <alternativeName>
        <fullName>GTP-binding protein-like 1</fullName>
    </alternativeName>
    <alternativeName>
        <fullName>Rho GTPase-like protein ARHU</fullName>
    </alternativeName>
    <alternativeName>
        <fullName>Ryu GTPase</fullName>
    </alternativeName>
    <alternativeName>
        <fullName>Wnt-1 responsive Cdc42 homolog 1</fullName>
        <shortName evidence="17">WRCH-1</shortName>
    </alternativeName>
</protein>
<comment type="function">
    <text evidence="3 9 10 11 13">Binds to and activates protein kinase PAK1 (PubMed:11459829). Plays a role in the regulation of cell morphology, cytoskeletal organization and focal adhesion assembly during cell migration (PubMed:11459829, PubMed:17620058, PubMed:18086875, PubMed:21834987). Also stimulates quiescent cells to reenter the cell cycle (PubMed:11459829). Has no detectable GTPase activity but its high intrinsic guanine nucleotide exchange activity suggests it is constitutively GTP-bound (PubMed:16472646).</text>
</comment>
<comment type="cofactor">
    <cofactor evidence="9">
        <name>Mg(2+)</name>
        <dbReference type="ChEBI" id="CHEBI:18420"/>
    </cofactor>
</comment>
<comment type="subunit">
    <text evidence="10 11 12 14">Interacts with PAK1 (PubMed:26598620). Interacts with PAK3 (PubMed:17620058). Interacts with ARHGAP30 in a GTP-independent manner. In its GTP-loaded conformation, interacts with ARHGAP31 (PubMed:21565175). Interacts with PTK2B/PYK2 (PubMed:18086875). Interacts with PAK4; the interaction is PAK4 kinase activity-independent and protects RHOU from ubiquitination (PubMed:26598620).</text>
</comment>
<comment type="interaction">
    <interactant intactId="EBI-1638043">
        <id>Q7L0Q8</id>
    </interactant>
    <interactant intactId="EBI-2814810">
        <id>Q7Z6I6</id>
        <label>ARHGAP30</label>
    </interactant>
    <organismsDiffer>false</organismsDiffer>
    <experiments>2</experiments>
</comment>
<comment type="interaction">
    <interactant intactId="EBI-1638043">
        <id>Q7L0Q8</id>
    </interactant>
    <interactant intactId="EBI-26970905">
        <id>Q7Z6I6-2</id>
        <label>ARHGAP30</label>
    </interactant>
    <organismsDiffer>false</organismsDiffer>
    <experiments>3</experiments>
</comment>
<comment type="interaction">
    <interactant intactId="EBI-1638043">
        <id>Q7L0Q8</id>
    </interactant>
    <interactant intactId="EBI-713635">
        <id>O43639</id>
        <label>NCK2</label>
    </interactant>
    <organismsDiffer>false</organismsDiffer>
    <experiments>6</experiments>
</comment>
<comment type="interaction">
    <interactant intactId="EBI-1638043">
        <id>Q7L0Q8</id>
    </interactant>
    <interactant intactId="EBI-1019502">
        <id>Q13153-2</id>
        <label>PAK1</label>
    </interactant>
    <organismsDiffer>false</organismsDiffer>
    <experiments>2</experiments>
</comment>
<comment type="interaction">
    <interactant intactId="EBI-1638043">
        <id>Q7L0Q8</id>
    </interactant>
    <interactant intactId="EBI-298640">
        <id>Q14289</id>
        <label>PTK2B</label>
    </interactant>
    <organismsDiffer>false</organismsDiffer>
    <experiments>4</experiments>
</comment>
<comment type="interaction">
    <interactant intactId="EBI-1638043">
        <id>Q7L0Q8</id>
    </interactant>
    <interactant intactId="EBI-4325995">
        <id>A6X8Z5</id>
        <label>Arhgap31</label>
    </interactant>
    <organismsDiffer>true</organismsDiffer>
    <experiments>2</experiments>
</comment>
<comment type="subcellular location">
    <subcellularLocation>
        <location evidence="8 9 10">Cell membrane</location>
        <topology evidence="8 9 10">Lipid-anchor</topology>
        <orientation evidence="8 9 10">Cytoplasmic side</orientation>
    </subcellularLocation>
    <subcellularLocation>
        <location evidence="8 9 10">Golgi apparatus membrane</location>
        <topology evidence="8 9 10">Lipid-anchor</topology>
    </subcellularLocation>
    <subcellularLocation>
        <location evidence="8 9 10 14">Cell junction</location>
        <location evidence="8 9 10 14">Focal adhesion</location>
    </subcellularLocation>
    <subcellularLocation>
        <location evidence="8 9 10">Cell projection</location>
        <location evidence="8 9 10">Podosome</location>
    </subcellularLocation>
    <text evidence="8 9 10">Localizes to podosomes in SRC-transformed cells.</text>
</comment>
<comment type="alternative products">
    <event type="alternative splicing"/>
    <isoform>
        <id>Q7L0Q8-1</id>
        <name evidence="3 4 5 6 7 15 16">1</name>
        <sequence type="displayed"/>
    </isoform>
    <isoform>
        <id>Q7L0Q8-2</id>
        <name>2</name>
        <sequence type="described" ref="VSP_052732 VSP_052733"/>
    </isoform>
</comment>
<comment type="tissue specificity">
    <text evidence="3 6">Ubiquitously expressed in all tissues examined. Expressed at high levels in the stomach, small intestine, brain, skeletal muscle and placenta.</text>
</comment>
<comment type="PTM">
    <text evidence="14">Ubiquitinated. 'Lys-48'-linked ubiquitination at Lys-177 and Lys-248 by the ECS(RAB40A) complex leading to its degradation.</text>
</comment>
<comment type="PTM">
    <text evidence="11">Tyrosine phosphorylated by SRC in response to PTK2B/PYK2 activation.</text>
</comment>
<comment type="similarity">
    <text evidence="9">Belongs to the small GTPase superfamily. Rho family.</text>
</comment>
<keyword id="KW-0002">3D-structure</keyword>
<keyword id="KW-0025">Alternative splicing</keyword>
<keyword id="KW-0965">Cell junction</keyword>
<keyword id="KW-1003">Cell membrane</keyword>
<keyword id="KW-0966">Cell projection</keyword>
<keyword id="KW-0333">Golgi apparatus</keyword>
<keyword id="KW-0342">GTP-binding</keyword>
<keyword id="KW-1017">Isopeptide bond</keyword>
<keyword id="KW-0449">Lipoprotein</keyword>
<keyword id="KW-0460">Magnesium</keyword>
<keyword id="KW-0472">Membrane</keyword>
<keyword id="KW-0479">Metal-binding</keyword>
<keyword id="KW-0547">Nucleotide-binding</keyword>
<keyword id="KW-0564">Palmitate</keyword>
<keyword id="KW-0597">Phosphoprotein</keyword>
<keyword id="KW-1267">Proteomics identification</keyword>
<keyword id="KW-1185">Reference proteome</keyword>
<keyword id="KW-0832">Ubl conjugation</keyword>
<evidence type="ECO:0000250" key="1"/>
<evidence type="ECO:0000256" key="2">
    <source>
        <dbReference type="SAM" id="MobiDB-lite"/>
    </source>
</evidence>
<evidence type="ECO:0000269" key="3">
    <source>
    </source>
</evidence>
<evidence type="ECO:0000269" key="4">
    <source>
    </source>
</evidence>
<evidence type="ECO:0000269" key="5">
    <source>
    </source>
</evidence>
<evidence type="ECO:0000269" key="6">
    <source>
    </source>
</evidence>
<evidence type="ECO:0000269" key="7">
    <source>
    </source>
</evidence>
<evidence type="ECO:0000269" key="8">
    <source>
    </source>
</evidence>
<evidence type="ECO:0000269" key="9">
    <source>
    </source>
</evidence>
<evidence type="ECO:0000269" key="10">
    <source>
    </source>
</evidence>
<evidence type="ECO:0000269" key="11">
    <source>
    </source>
</evidence>
<evidence type="ECO:0000269" key="12">
    <source>
    </source>
</evidence>
<evidence type="ECO:0000269" key="13">
    <source>
    </source>
</evidence>
<evidence type="ECO:0000269" key="14">
    <source>
    </source>
</evidence>
<evidence type="ECO:0000269" key="15">
    <source ref="5"/>
</evidence>
<evidence type="ECO:0000269" key="16">
    <source ref="6"/>
</evidence>
<evidence type="ECO:0000303" key="17">
    <source>
    </source>
</evidence>
<evidence type="ECO:0000303" key="18">
    <source ref="7"/>
</evidence>
<evidence type="ECO:0000305" key="19"/>
<evidence type="ECO:0000312" key="20">
    <source>
        <dbReference type="EMBL" id="AAH40076.1"/>
    </source>
</evidence>
<evidence type="ECO:0000312" key="21">
    <source>
        <dbReference type="EMBL" id="AAK83340.1"/>
    </source>
</evidence>
<evidence type="ECO:0000312" key="22">
    <source>
        <dbReference type="EMBL" id="AAL54874.1"/>
    </source>
</evidence>
<evidence type="ECO:0000312" key="23">
    <source>
        <dbReference type="EMBL" id="ABD48870.1"/>
    </source>
</evidence>
<evidence type="ECO:0000312" key="24">
    <source>
        <dbReference type="EMBL" id="BAB18638.1"/>
    </source>
</evidence>
<evidence type="ECO:0000312" key="25">
    <source>
        <dbReference type="EMBL" id="BAB86361.1"/>
    </source>
</evidence>
<evidence type="ECO:0000312" key="26">
    <source>
        <dbReference type="EMBL" id="BAF82660.1"/>
    </source>
</evidence>
<evidence type="ECO:0000312" key="27">
    <source>
        <dbReference type="HGNC" id="HGNC:17794"/>
    </source>
</evidence>
<evidence type="ECO:0007829" key="28">
    <source>
        <dbReference type="PDB" id="2Q3H"/>
    </source>
</evidence>
<feature type="chain" id="PRO_0000326435" description="Rho-related GTP-binding protein RhoU">
    <location>
        <begin position="1"/>
        <end position="258"/>
    </location>
</feature>
<feature type="region of interest" description="Disordered" evidence="2">
    <location>
        <begin position="1"/>
        <end position="45"/>
    </location>
</feature>
<feature type="compositionally biased region" description="Basic and acidic residues" evidence="2">
    <location>
        <begin position="10"/>
        <end position="27"/>
    </location>
</feature>
<feature type="compositionally biased region" description="Gly residues" evidence="2">
    <location>
        <begin position="29"/>
        <end position="45"/>
    </location>
</feature>
<feature type="binding site" evidence="3">
    <location>
        <begin position="56"/>
        <end position="63"/>
    </location>
    <ligand>
        <name>GTP</name>
        <dbReference type="ChEBI" id="CHEBI:37565"/>
    </ligand>
</feature>
<feature type="binding site" evidence="1">
    <location>
        <begin position="103"/>
        <end position="107"/>
    </location>
    <ligand>
        <name>GTP</name>
        <dbReference type="ChEBI" id="CHEBI:37565"/>
    </ligand>
</feature>
<feature type="binding site">
    <location>
        <begin position="161"/>
        <end position="164"/>
    </location>
    <ligand>
        <name>GTP</name>
        <dbReference type="ChEBI" id="CHEBI:37565"/>
    </ligand>
</feature>
<feature type="lipid moiety-binding region" description="S-palmitoyl cysteine" evidence="8">
    <location>
        <position position="256"/>
    </location>
</feature>
<feature type="cross-link" description="Glycyl lysine isopeptide (Lys-Gly) (interchain with G-Cter in ubiquitin)" evidence="14">
    <location>
        <position position="177"/>
    </location>
</feature>
<feature type="cross-link" description="Glycyl lysine isopeptide (Lys-Gly) (interchain with G-Cter in ubiquitin)" evidence="14">
    <location>
        <position position="248"/>
    </location>
</feature>
<feature type="splice variant" id="VSP_052732" description="In isoform 2." evidence="18">
    <location>
        <begin position="1"/>
        <end position="61"/>
    </location>
</feature>
<feature type="splice variant" id="VSP_052733" description="In isoform 2." evidence="18">
    <original>KTSLV</original>
    <variation>MTNIG</variation>
    <location>
        <begin position="62"/>
        <end position="66"/>
    </location>
</feature>
<feature type="sequence variant" id="VAR_051975" description="In dbSNP:rs3820264.">
    <original>T</original>
    <variation>A</variation>
    <location>
        <position position="121"/>
    </location>
</feature>
<feature type="mutagenesis site" description="Loss of GTP-binding and localization to focal adhesions. No effect on ARHGAP30-binding." evidence="3 10 12">
    <original>T</original>
    <variation>N</variation>
    <location>
        <position position="63"/>
    </location>
</feature>
<feature type="mutagenesis site" description="No effect on ARHGAP30-binding." evidence="12">
    <original>P</original>
    <variation>G</variation>
    <location>
        <position position="80"/>
    </location>
</feature>
<feature type="mutagenesis site" description="Loss of binding to PAK3; when associated with A-83 and C-86." evidence="10">
    <original>T</original>
    <variation>S</variation>
    <location>
        <position position="81"/>
    </location>
</feature>
<feature type="mutagenesis site" description="Loss of binding to PAK3; when associated with S-81 and C-86." evidence="10 12">
    <original>F</original>
    <variation>A</variation>
    <location>
        <position position="83"/>
    </location>
</feature>
<feature type="mutagenesis site" description="Loss of ARHGAP30-binding." evidence="10 12">
    <original>F</original>
    <variation>G</variation>
    <location>
        <position position="83"/>
    </location>
</feature>
<feature type="mutagenesis site" description="Loss of PAK3-binding; when associated with S-81 and A-83. No effect on ARHGAP30-binding." evidence="10 12">
    <original>F</original>
    <variation>C</variation>
    <location>
        <position position="86"/>
    </location>
</feature>
<feature type="mutagenesis site" description="Constitutively active. Results in increased rates of stress fiber dissolution and cell migration. No effect on ARHGAP30-binding." evidence="3 10 12">
    <original>Q</original>
    <variation>L</variation>
    <location>
        <position position="107"/>
    </location>
</feature>
<feature type="mutagenesis site" description="Decreased ubiquitination." evidence="14">
    <original>K</original>
    <variation>R</variation>
    <location>
        <position position="177"/>
    </location>
</feature>
<feature type="mutagenesis site" description="Decreased ubiquitination." evidence="14">
    <original>K</original>
    <variation>R</variation>
    <location>
        <position position="248"/>
    </location>
</feature>
<feature type="mutagenesis site" description="No effect on subcellular location." evidence="8">
    <original>C</original>
    <variation>S</variation>
    <location>
        <position position="255"/>
    </location>
</feature>
<feature type="mutagenesis site" description="Loss of subcellular location to plasma and intracellular membranes." evidence="8">
    <original>C</original>
    <variation>S</variation>
    <location>
        <position position="256"/>
    </location>
</feature>
<feature type="sequence conflict" description="In Ref. 7; BAD92748." evidence="19" ref="7">
    <original>MPPQQGDPAFPDR</original>
    <variation>QLLPTATLRGGGAVGPGPASPRPQA</variation>
    <location>
        <begin position="1"/>
        <end position="13"/>
    </location>
</feature>
<feature type="sequence conflict" description="In Ref. 2; AAL99390." evidence="19" ref="2">
    <original>T</original>
    <variation>P</variation>
    <location>
        <position position="71"/>
    </location>
</feature>
<feature type="strand" evidence="28">
    <location>
        <begin position="50"/>
        <end position="55"/>
    </location>
</feature>
<feature type="helix" evidence="28">
    <location>
        <begin position="62"/>
        <end position="70"/>
    </location>
</feature>
<feature type="strand" evidence="28">
    <location>
        <begin position="82"/>
        <end position="92"/>
    </location>
</feature>
<feature type="strand" evidence="28">
    <location>
        <begin position="95"/>
        <end position="103"/>
    </location>
</feature>
<feature type="strand" evidence="28">
    <location>
        <begin position="111"/>
        <end position="113"/>
    </location>
</feature>
<feature type="helix" evidence="28">
    <location>
        <begin position="114"/>
        <end position="118"/>
    </location>
</feature>
<feature type="strand" evidence="28">
    <location>
        <begin position="122"/>
        <end position="129"/>
    </location>
</feature>
<feature type="helix" evidence="28">
    <location>
        <begin position="133"/>
        <end position="141"/>
    </location>
</feature>
<feature type="helix" evidence="28">
    <location>
        <begin position="143"/>
        <end position="150"/>
    </location>
</feature>
<feature type="strand" evidence="28">
    <location>
        <begin position="152"/>
        <end position="154"/>
    </location>
</feature>
<feature type="strand" evidence="28">
    <location>
        <begin position="156"/>
        <end position="161"/>
    </location>
</feature>
<feature type="helix" evidence="28">
    <location>
        <begin position="163"/>
        <end position="167"/>
    </location>
</feature>
<feature type="helix" evidence="28">
    <location>
        <begin position="169"/>
        <end position="176"/>
    </location>
</feature>
<feature type="turn" evidence="28">
    <location>
        <begin position="177"/>
        <end position="179"/>
    </location>
</feature>
<feature type="helix" evidence="28">
    <location>
        <begin position="185"/>
        <end position="195"/>
    </location>
</feature>
<feature type="strand" evidence="28">
    <location>
        <begin position="198"/>
        <end position="202"/>
    </location>
</feature>
<feature type="turn" evidence="28">
    <location>
        <begin position="205"/>
        <end position="207"/>
    </location>
</feature>
<feature type="helix" evidence="28">
    <location>
        <begin position="211"/>
        <end position="226"/>
    </location>
</feature>
<accession>Q7L0Q8</accession>
<accession>B1AKN1</accession>
<accession>Q59FE9</accession>
<accession>Q8TDQ2</accession>
<name>RHOU_HUMAN</name>
<dbReference type="EMBL" id="AF378087">
    <property type="protein sequence ID" value="AAK83340.1"/>
    <property type="molecule type" value="mRNA"/>
</dbReference>
<dbReference type="EMBL" id="AB074878">
    <property type="protein sequence ID" value="BAB86361.1"/>
    <property type="molecule type" value="mRNA"/>
</dbReference>
<dbReference type="EMBL" id="AB051826">
    <property type="protein sequence ID" value="BAB18638.1"/>
    <property type="molecule type" value="mRNA"/>
</dbReference>
<dbReference type="EMBL" id="DQ384420">
    <property type="protein sequence ID" value="ABD48870.1"/>
    <property type="molecule type" value="Genomic_DNA"/>
</dbReference>
<dbReference type="EMBL" id="DQ384421">
    <property type="protein sequence ID" value="ABD48871.1"/>
    <property type="molecule type" value="Genomic_DNA"/>
</dbReference>
<dbReference type="EMBL" id="DQ384422">
    <property type="protein sequence ID" value="ABD48872.1"/>
    <property type="molecule type" value="Genomic_DNA"/>
</dbReference>
<dbReference type="EMBL" id="DQ384423">
    <property type="protein sequence ID" value="ABD48873.1"/>
    <property type="molecule type" value="Genomic_DNA"/>
</dbReference>
<dbReference type="EMBL" id="DQ384424">
    <property type="protein sequence ID" value="ABD48874.1"/>
    <property type="molecule type" value="Genomic_DNA"/>
</dbReference>
<dbReference type="EMBL" id="DQ384425">
    <property type="protein sequence ID" value="ABD48875.1"/>
    <property type="molecule type" value="Genomic_DNA"/>
</dbReference>
<dbReference type="EMBL" id="AF211836">
    <property type="protein sequence ID" value="AAL54874.1"/>
    <property type="molecule type" value="mRNA"/>
</dbReference>
<dbReference type="EMBL" id="AF282258">
    <property type="protein sequence ID" value="AAG46058.1"/>
    <property type="molecule type" value="mRNA"/>
</dbReference>
<dbReference type="EMBL" id="AF251701">
    <property type="protein sequence ID" value="AAL99390.1"/>
    <property type="molecule type" value="mRNA"/>
</dbReference>
<dbReference type="EMBL" id="AK289971">
    <property type="protein sequence ID" value="BAF82660.1"/>
    <property type="molecule type" value="mRNA"/>
</dbReference>
<dbReference type="EMBL" id="AB209511">
    <property type="protein sequence ID" value="BAD92748.1"/>
    <property type="molecule type" value="mRNA"/>
</dbReference>
<dbReference type="EMBL" id="AL096776">
    <property type="status" value="NOT_ANNOTATED_CDS"/>
    <property type="molecule type" value="Genomic_DNA"/>
</dbReference>
<dbReference type="EMBL" id="CH471098">
    <property type="protein sequence ID" value="EAW69885.1"/>
    <property type="molecule type" value="Genomic_DNA"/>
</dbReference>
<dbReference type="EMBL" id="BC040076">
    <property type="protein sequence ID" value="AAH40076.1"/>
    <property type="molecule type" value="mRNA"/>
</dbReference>
<dbReference type="CCDS" id="CCDS1575.1">
    <molecule id="Q7L0Q8-1"/>
</dbReference>
<dbReference type="RefSeq" id="NP_067028.1">
    <molecule id="Q7L0Q8-1"/>
    <property type="nucleotide sequence ID" value="NM_021205.6"/>
</dbReference>
<dbReference type="PDB" id="2Q3H">
    <property type="method" value="X-ray"/>
    <property type="resolution" value="1.73 A"/>
    <property type="chains" value="A=32-230"/>
</dbReference>
<dbReference type="PDBsum" id="2Q3H"/>
<dbReference type="SMR" id="Q7L0Q8"/>
<dbReference type="BioGRID" id="121812">
    <property type="interactions" value="508"/>
</dbReference>
<dbReference type="FunCoup" id="Q7L0Q8">
    <property type="interactions" value="717"/>
</dbReference>
<dbReference type="IntAct" id="Q7L0Q8">
    <property type="interactions" value="9"/>
</dbReference>
<dbReference type="MINT" id="Q7L0Q8"/>
<dbReference type="STRING" id="9606.ENSP00000355652"/>
<dbReference type="iPTMnet" id="Q7L0Q8"/>
<dbReference type="PhosphoSitePlus" id="Q7L0Q8"/>
<dbReference type="SwissPalm" id="Q7L0Q8"/>
<dbReference type="BioMuta" id="RHOU"/>
<dbReference type="DMDM" id="172046189"/>
<dbReference type="jPOST" id="Q7L0Q8"/>
<dbReference type="MassIVE" id="Q7L0Q8"/>
<dbReference type="PaxDb" id="9606-ENSP00000355652"/>
<dbReference type="PeptideAtlas" id="Q7L0Q8"/>
<dbReference type="ProteomicsDB" id="68734">
    <molecule id="Q7L0Q8-1"/>
</dbReference>
<dbReference type="ProteomicsDB" id="68735">
    <molecule id="Q7L0Q8-2"/>
</dbReference>
<dbReference type="Antibodypedia" id="34671">
    <property type="antibodies" value="155 antibodies from 25 providers"/>
</dbReference>
<dbReference type="DNASU" id="58480"/>
<dbReference type="Ensembl" id="ENST00000366691.4">
    <molecule id="Q7L0Q8-1"/>
    <property type="protein sequence ID" value="ENSP00000355652.3"/>
    <property type="gene ID" value="ENSG00000116574.6"/>
</dbReference>
<dbReference type="Ensembl" id="ENST00000646945.2">
    <molecule id="Q7L0Q8-1"/>
    <property type="protein sequence ID" value="ENSP00000494673.1"/>
    <property type="gene ID" value="ENSG00000284984.2"/>
</dbReference>
<dbReference type="GeneID" id="58480"/>
<dbReference type="KEGG" id="hsa:58480"/>
<dbReference type="MANE-Select" id="ENST00000366691.4">
    <property type="protein sequence ID" value="ENSP00000355652.3"/>
    <property type="RefSeq nucleotide sequence ID" value="NM_021205.6"/>
    <property type="RefSeq protein sequence ID" value="NP_067028.1"/>
</dbReference>
<dbReference type="UCSC" id="uc001htf.3">
    <molecule id="Q7L0Q8-1"/>
    <property type="organism name" value="human"/>
</dbReference>
<dbReference type="AGR" id="HGNC:17794"/>
<dbReference type="CTD" id="58480"/>
<dbReference type="DisGeNET" id="58480"/>
<dbReference type="GeneCards" id="RHOU"/>
<dbReference type="HGNC" id="HGNC:17794">
    <property type="gene designation" value="RHOU"/>
</dbReference>
<dbReference type="HPA" id="ENSG00000116574">
    <property type="expression patterns" value="Low tissue specificity"/>
</dbReference>
<dbReference type="MIM" id="606366">
    <property type="type" value="gene"/>
</dbReference>
<dbReference type="neXtProt" id="NX_Q7L0Q8"/>
<dbReference type="OpenTargets" id="ENSG00000116574"/>
<dbReference type="PharmGKB" id="PA38246"/>
<dbReference type="VEuPathDB" id="HostDB:ENSG00000116574"/>
<dbReference type="eggNOG" id="KOG0393">
    <property type="taxonomic scope" value="Eukaryota"/>
</dbReference>
<dbReference type="GeneTree" id="ENSGT00940000156644"/>
<dbReference type="HOGENOM" id="CLU_041217_21_7_1"/>
<dbReference type="InParanoid" id="Q7L0Q8"/>
<dbReference type="OMA" id="WVLEIRR"/>
<dbReference type="OrthoDB" id="8830751at2759"/>
<dbReference type="PAN-GO" id="Q7L0Q8">
    <property type="GO annotations" value="6 GO annotations based on evolutionary models"/>
</dbReference>
<dbReference type="PhylomeDB" id="Q7L0Q8"/>
<dbReference type="TreeFam" id="TF321839"/>
<dbReference type="PathwayCommons" id="Q7L0Q8"/>
<dbReference type="Reactome" id="R-HSA-6785807">
    <property type="pathway name" value="Interleukin-4 and Interleukin-13 signaling"/>
</dbReference>
<dbReference type="Reactome" id="R-HSA-9013420">
    <property type="pathway name" value="RHOU GTPase cycle"/>
</dbReference>
<dbReference type="SignaLink" id="Q7L0Q8"/>
<dbReference type="SIGNOR" id="Q7L0Q8"/>
<dbReference type="BioGRID-ORCS" id="58480">
    <property type="hits" value="10 hits in 1153 CRISPR screens"/>
</dbReference>
<dbReference type="ChiTaRS" id="RHOU">
    <property type="organism name" value="human"/>
</dbReference>
<dbReference type="EvolutionaryTrace" id="Q7L0Q8"/>
<dbReference type="GenomeRNAi" id="58480"/>
<dbReference type="Pharos" id="Q7L0Q8">
    <property type="development level" value="Tbio"/>
</dbReference>
<dbReference type="PRO" id="PR:Q7L0Q8"/>
<dbReference type="Proteomes" id="UP000005640">
    <property type="component" value="Chromosome 1"/>
</dbReference>
<dbReference type="RNAct" id="Q7L0Q8">
    <property type="molecule type" value="protein"/>
</dbReference>
<dbReference type="Bgee" id="ENSG00000116574">
    <property type="expression patterns" value="Expressed in corpus callosum and 103 other cell types or tissues"/>
</dbReference>
<dbReference type="ExpressionAtlas" id="Q7L0Q8">
    <property type="expression patterns" value="baseline and differential"/>
</dbReference>
<dbReference type="GO" id="GO:0042995">
    <property type="term" value="C:cell projection"/>
    <property type="evidence" value="ECO:0007669"/>
    <property type="project" value="UniProtKB-KW"/>
</dbReference>
<dbReference type="GO" id="GO:0005829">
    <property type="term" value="C:cytosol"/>
    <property type="evidence" value="ECO:0000304"/>
    <property type="project" value="Reactome"/>
</dbReference>
<dbReference type="GO" id="GO:0010008">
    <property type="term" value="C:endosome membrane"/>
    <property type="evidence" value="ECO:0000304"/>
    <property type="project" value="Reactome"/>
</dbReference>
<dbReference type="GO" id="GO:0005925">
    <property type="term" value="C:focal adhesion"/>
    <property type="evidence" value="ECO:0007669"/>
    <property type="project" value="UniProtKB-SubCell"/>
</dbReference>
<dbReference type="GO" id="GO:0000139">
    <property type="term" value="C:Golgi membrane"/>
    <property type="evidence" value="ECO:0007669"/>
    <property type="project" value="UniProtKB-SubCell"/>
</dbReference>
<dbReference type="GO" id="GO:0005886">
    <property type="term" value="C:plasma membrane"/>
    <property type="evidence" value="ECO:0000318"/>
    <property type="project" value="GO_Central"/>
</dbReference>
<dbReference type="GO" id="GO:0002102">
    <property type="term" value="C:podosome"/>
    <property type="evidence" value="ECO:0007669"/>
    <property type="project" value="UniProtKB-SubCell"/>
</dbReference>
<dbReference type="GO" id="GO:0005525">
    <property type="term" value="F:GTP binding"/>
    <property type="evidence" value="ECO:0000318"/>
    <property type="project" value="GO_Central"/>
</dbReference>
<dbReference type="GO" id="GO:0003924">
    <property type="term" value="F:GTPase activity"/>
    <property type="evidence" value="ECO:0000318"/>
    <property type="project" value="GO_Central"/>
</dbReference>
<dbReference type="GO" id="GO:0005085">
    <property type="term" value="F:guanyl-nucleotide exchange factor activity"/>
    <property type="evidence" value="ECO:0000304"/>
    <property type="project" value="Reactome"/>
</dbReference>
<dbReference type="GO" id="GO:0046872">
    <property type="term" value="F:metal ion binding"/>
    <property type="evidence" value="ECO:0007669"/>
    <property type="project" value="UniProtKB-KW"/>
</dbReference>
<dbReference type="GO" id="GO:0019901">
    <property type="term" value="F:protein kinase binding"/>
    <property type="evidence" value="ECO:0000318"/>
    <property type="project" value="GO_Central"/>
</dbReference>
<dbReference type="GO" id="GO:0007015">
    <property type="term" value="P:actin filament organization"/>
    <property type="evidence" value="ECO:0000318"/>
    <property type="project" value="GO_Central"/>
</dbReference>
<dbReference type="GO" id="GO:0007010">
    <property type="term" value="P:cytoskeleton organization"/>
    <property type="evidence" value="ECO:0000315"/>
    <property type="project" value="UniProtKB"/>
</dbReference>
<dbReference type="GO" id="GO:0006897">
    <property type="term" value="P:endocytosis"/>
    <property type="evidence" value="ECO:0000318"/>
    <property type="project" value="GO_Central"/>
</dbReference>
<dbReference type="GO" id="GO:0030010">
    <property type="term" value="P:establishment of cell polarity"/>
    <property type="evidence" value="ECO:0000318"/>
    <property type="project" value="GO_Central"/>
</dbReference>
<dbReference type="GO" id="GO:0000082">
    <property type="term" value="P:G1/S transition of mitotic cell cycle"/>
    <property type="evidence" value="ECO:0007669"/>
    <property type="project" value="Ensembl"/>
</dbReference>
<dbReference type="GO" id="GO:1903955">
    <property type="term" value="P:positive regulation of protein targeting to mitochondrion"/>
    <property type="evidence" value="ECO:0007001"/>
    <property type="project" value="ParkinsonsUK-UCL"/>
</dbReference>
<dbReference type="GO" id="GO:0016601">
    <property type="term" value="P:Rac protein signal transduction"/>
    <property type="evidence" value="ECO:0007669"/>
    <property type="project" value="Ensembl"/>
</dbReference>
<dbReference type="GO" id="GO:0008360">
    <property type="term" value="P:regulation of cell shape"/>
    <property type="evidence" value="ECO:0000315"/>
    <property type="project" value="UniProtKB"/>
</dbReference>
<dbReference type="GO" id="GO:0051056">
    <property type="term" value="P:regulation of small GTPase mediated signal transduction"/>
    <property type="evidence" value="ECO:0000304"/>
    <property type="project" value="Reactome"/>
</dbReference>
<dbReference type="GO" id="GO:0007165">
    <property type="term" value="P:signal transduction"/>
    <property type="evidence" value="ECO:0000318"/>
    <property type="project" value="GO_Central"/>
</dbReference>
<dbReference type="CDD" id="cd04130">
    <property type="entry name" value="Wrch_1"/>
    <property type="match status" value="1"/>
</dbReference>
<dbReference type="FunFam" id="3.40.50.300:FF:000561">
    <property type="entry name" value="rho-related GTP-binding protein RhoV"/>
    <property type="match status" value="1"/>
</dbReference>
<dbReference type="Gene3D" id="3.40.50.300">
    <property type="entry name" value="P-loop containing nucleotide triphosphate hydrolases"/>
    <property type="match status" value="1"/>
</dbReference>
<dbReference type="InterPro" id="IPR027417">
    <property type="entry name" value="P-loop_NTPase"/>
</dbReference>
<dbReference type="InterPro" id="IPR005225">
    <property type="entry name" value="Small_GTP-bd"/>
</dbReference>
<dbReference type="InterPro" id="IPR001806">
    <property type="entry name" value="Small_GTPase"/>
</dbReference>
<dbReference type="InterPro" id="IPR003578">
    <property type="entry name" value="Small_GTPase_Rho"/>
</dbReference>
<dbReference type="NCBIfam" id="TIGR00231">
    <property type="entry name" value="small_GTP"/>
    <property type="match status" value="1"/>
</dbReference>
<dbReference type="PANTHER" id="PTHR24072">
    <property type="entry name" value="RHO FAMILY GTPASE"/>
    <property type="match status" value="1"/>
</dbReference>
<dbReference type="Pfam" id="PF00071">
    <property type="entry name" value="Ras"/>
    <property type="match status" value="1"/>
</dbReference>
<dbReference type="PRINTS" id="PR00449">
    <property type="entry name" value="RASTRNSFRMNG"/>
</dbReference>
<dbReference type="SMART" id="SM00175">
    <property type="entry name" value="RAB"/>
    <property type="match status" value="1"/>
</dbReference>
<dbReference type="SMART" id="SM00176">
    <property type="entry name" value="RAN"/>
    <property type="match status" value="1"/>
</dbReference>
<dbReference type="SMART" id="SM00173">
    <property type="entry name" value="RAS"/>
    <property type="match status" value="1"/>
</dbReference>
<dbReference type="SMART" id="SM00174">
    <property type="entry name" value="RHO"/>
    <property type="match status" value="1"/>
</dbReference>
<dbReference type="SUPFAM" id="SSF52540">
    <property type="entry name" value="P-loop containing nucleoside triphosphate hydrolases"/>
    <property type="match status" value="1"/>
</dbReference>
<dbReference type="PROSITE" id="PS51420">
    <property type="entry name" value="RHO"/>
    <property type="match status" value="1"/>
</dbReference>
<proteinExistence type="evidence at protein level"/>
<organism>
    <name type="scientific">Homo sapiens</name>
    <name type="common">Human</name>
    <dbReference type="NCBI Taxonomy" id="9606"/>
    <lineage>
        <taxon>Eukaryota</taxon>
        <taxon>Metazoa</taxon>
        <taxon>Chordata</taxon>
        <taxon>Craniata</taxon>
        <taxon>Vertebrata</taxon>
        <taxon>Euteleostomi</taxon>
        <taxon>Mammalia</taxon>
        <taxon>Eutheria</taxon>
        <taxon>Euarchontoglires</taxon>
        <taxon>Primates</taxon>
        <taxon>Haplorrhini</taxon>
        <taxon>Catarrhini</taxon>
        <taxon>Hominidae</taxon>
        <taxon>Homo</taxon>
    </lineage>
</organism>
<sequence>MPPQQGDPAFPDRCEAPPVPPRRERGGRGGRGPGEPGGRGRAGGAEGRGVKCVLVGDGAVGKTSLVVSYTTNGYPTEYIPTAFDNFSAVVSVDGRPVRLQLCDTAGQDEFDKLRPLCYTNTDIFLLCFSVVSPSSFQNVSEKWVPEIRCHCPKAPIILVGTQSDLREDVKVLIELDKCKEKPVPEEAAKLCAEEIKAASYIECSALTQKNLKEVFDAAIVAGIQYSDTQQQPKKSKSRTPDKMKNLSKSWWKKYCCFV</sequence>